<keyword id="KW-0025">Alternative splicing</keyword>
<keyword id="KW-0031">Aminopeptidase</keyword>
<keyword id="KW-0963">Cytoplasm</keyword>
<keyword id="KW-0378">Hydrolase</keyword>
<keyword id="KW-0597">Phosphoprotein</keyword>
<keyword id="KW-0645">Protease</keyword>
<keyword id="KW-1267">Proteomics identification</keyword>
<keyword id="KW-1185">Reference proteome</keyword>
<accession>Q5BKX5</accession>
<accession>A8MSZ5</accession>
<accession>B4DNU7</accession>
<dbReference type="EC" id="3.4.11.-" evidence="3"/>
<dbReference type="EMBL" id="AK298068">
    <property type="protein sequence ID" value="BAG60359.1"/>
    <property type="molecule type" value="mRNA"/>
</dbReference>
<dbReference type="EMBL" id="AC020945">
    <property type="status" value="NOT_ANNOTATED_CDS"/>
    <property type="molecule type" value="Genomic_DNA"/>
</dbReference>
<dbReference type="EMBL" id="BC020262">
    <property type="status" value="NOT_ANNOTATED_CDS"/>
    <property type="molecule type" value="mRNA"/>
</dbReference>
<dbReference type="EMBL" id="BC090894">
    <property type="protein sequence ID" value="AAH90894.1"/>
    <property type="molecule type" value="mRNA"/>
</dbReference>
<dbReference type="CCDS" id="CCDS12564.2">
    <molecule id="Q5BKX5-1"/>
</dbReference>
<dbReference type="RefSeq" id="NP_001340734.1">
    <molecule id="Q5BKX5-3"/>
    <property type="nucleotide sequence ID" value="NM_001353805.2"/>
</dbReference>
<dbReference type="RefSeq" id="NP_940878.3">
    <molecule id="Q5BKX5-1"/>
    <property type="nucleotide sequence ID" value="NM_198476.5"/>
</dbReference>
<dbReference type="RefSeq" id="XP_005258835.1">
    <property type="nucleotide sequence ID" value="XM_005258778.4"/>
</dbReference>
<dbReference type="RefSeq" id="XP_016882116.1">
    <property type="nucleotide sequence ID" value="XM_017026627.1"/>
</dbReference>
<dbReference type="BioGRID" id="129828">
    <property type="interactions" value="81"/>
</dbReference>
<dbReference type="FunCoup" id="Q5BKX5">
    <property type="interactions" value="94"/>
</dbReference>
<dbReference type="IntAct" id="Q5BKX5">
    <property type="interactions" value="70"/>
</dbReference>
<dbReference type="STRING" id="9606.ENSP00000367564"/>
<dbReference type="GlyGen" id="Q5BKX5">
    <property type="glycosylation" value="1 site, 1 O-linked glycan (1 site)"/>
</dbReference>
<dbReference type="iPTMnet" id="Q5BKX5"/>
<dbReference type="PhosphoSitePlus" id="Q5BKX5"/>
<dbReference type="BioMuta" id="C19orf54"/>
<dbReference type="DMDM" id="308153429"/>
<dbReference type="jPOST" id="Q5BKX5"/>
<dbReference type="MassIVE" id="Q5BKX5"/>
<dbReference type="PaxDb" id="9606-ENSP00000367564"/>
<dbReference type="PeptideAtlas" id="Q5BKX5"/>
<dbReference type="ProteomicsDB" id="62702">
    <molecule id="Q5BKX5-1"/>
</dbReference>
<dbReference type="ProteomicsDB" id="62703">
    <molecule id="Q5BKX5-2"/>
</dbReference>
<dbReference type="ProteomicsDB" id="62704">
    <molecule id="Q5BKX5-3"/>
</dbReference>
<dbReference type="Pumba" id="Q5BKX5"/>
<dbReference type="Antibodypedia" id="45214">
    <property type="antibodies" value="62 antibodies from 14 providers"/>
</dbReference>
<dbReference type="DNASU" id="284325"/>
<dbReference type="Ensembl" id="ENST00000378313.7">
    <molecule id="Q5BKX5-1"/>
    <property type="protein sequence ID" value="ENSP00000367564.2"/>
    <property type="gene ID" value="ENSG00000188493.15"/>
</dbReference>
<dbReference type="GeneID" id="284325"/>
<dbReference type="KEGG" id="hsa:284325"/>
<dbReference type="MANE-Select" id="ENST00000378313.7">
    <property type="protein sequence ID" value="ENSP00000367564.2"/>
    <property type="RefSeq nucleotide sequence ID" value="NM_198476.5"/>
    <property type="RefSeq protein sequence ID" value="NP_940878.3"/>
</dbReference>
<dbReference type="UCSC" id="uc002oou.1">
    <molecule id="Q5BKX5-1"/>
    <property type="organism name" value="human"/>
</dbReference>
<dbReference type="AGR" id="HGNC:24758"/>
<dbReference type="CTD" id="284325"/>
<dbReference type="DisGeNET" id="284325"/>
<dbReference type="GeneCards" id="ACTMAP"/>
<dbReference type="HGNC" id="HGNC:24758">
    <property type="gene designation" value="ACTMAP"/>
</dbReference>
<dbReference type="HPA" id="ENSG00000188493">
    <property type="expression patterns" value="Low tissue specificity"/>
</dbReference>
<dbReference type="MIM" id="620093">
    <property type="type" value="gene"/>
</dbReference>
<dbReference type="neXtProt" id="NX_Q5BKX5"/>
<dbReference type="OpenTargets" id="ENSG00000188493"/>
<dbReference type="PharmGKB" id="PA147358417"/>
<dbReference type="VEuPathDB" id="HostDB:ENSG00000188493"/>
<dbReference type="eggNOG" id="ENOG502QQQD">
    <property type="taxonomic scope" value="Eukaryota"/>
</dbReference>
<dbReference type="GeneTree" id="ENSGT00390000012368"/>
<dbReference type="HOGENOM" id="CLU_077492_1_0_1"/>
<dbReference type="InParanoid" id="Q5BKX5"/>
<dbReference type="OMA" id="QLWDYEQ"/>
<dbReference type="PAN-GO" id="Q5BKX5">
    <property type="GO annotations" value="0 GO annotations based on evolutionary models"/>
</dbReference>
<dbReference type="PhylomeDB" id="Q5BKX5"/>
<dbReference type="TreeFam" id="TF314051"/>
<dbReference type="PathwayCommons" id="Q5BKX5"/>
<dbReference type="SignaLink" id="Q5BKX5"/>
<dbReference type="BioGRID-ORCS" id="284325">
    <property type="hits" value="15 hits in 1126 CRISPR screens"/>
</dbReference>
<dbReference type="GenomeRNAi" id="284325"/>
<dbReference type="Pharos" id="Q5BKX5">
    <property type="development level" value="Tdark"/>
</dbReference>
<dbReference type="PRO" id="PR:Q5BKX5"/>
<dbReference type="Proteomes" id="UP000005640">
    <property type="component" value="Chromosome 19"/>
</dbReference>
<dbReference type="RNAct" id="Q5BKX5">
    <property type="molecule type" value="protein"/>
</dbReference>
<dbReference type="Bgee" id="ENSG00000188493">
    <property type="expression patterns" value="Expressed in pancreatic ductal cell and 186 other cell types or tissues"/>
</dbReference>
<dbReference type="ExpressionAtlas" id="Q5BKX5">
    <property type="expression patterns" value="baseline and differential"/>
</dbReference>
<dbReference type="GO" id="GO:0005737">
    <property type="term" value="C:cytoplasm"/>
    <property type="evidence" value="ECO:0007669"/>
    <property type="project" value="UniProtKB-SubCell"/>
</dbReference>
<dbReference type="GO" id="GO:0070005">
    <property type="term" value="F:cysteine-type aminopeptidase activity"/>
    <property type="evidence" value="ECO:0000314"/>
    <property type="project" value="FlyBase"/>
</dbReference>
<dbReference type="GO" id="GO:0004239">
    <property type="term" value="F:initiator methionyl aminopeptidase activity"/>
    <property type="evidence" value="ECO:0000314"/>
    <property type="project" value="UniProtKB"/>
</dbReference>
<dbReference type="GO" id="GO:0016485">
    <property type="term" value="P:protein processing"/>
    <property type="evidence" value="ECO:0000314"/>
    <property type="project" value="UniProtKB"/>
</dbReference>
<dbReference type="InterPro" id="IPR040043">
    <property type="entry name" value="ACTMAP"/>
</dbReference>
<dbReference type="PANTHER" id="PTHR28631:SF1">
    <property type="entry name" value="ACTIN MATURATION PROTEASE"/>
    <property type="match status" value="1"/>
</dbReference>
<dbReference type="PANTHER" id="PTHR28631">
    <property type="entry name" value="UPF0692 PROTEIN C19ORF54"/>
    <property type="match status" value="1"/>
</dbReference>
<dbReference type="Pfam" id="PF21646">
    <property type="entry name" value="ACTMAP-like_C"/>
    <property type="match status" value="1"/>
</dbReference>
<protein>
    <recommendedName>
        <fullName evidence="6">Actin maturation protease</fullName>
        <ecNumber evidence="3">3.4.11.-</ecNumber>
    </recommendedName>
    <alternativeName>
        <fullName evidence="7">Actin aminopeptidase ACTMAP</fullName>
    </alternativeName>
</protein>
<feature type="chain" id="PRO_0000297659" description="Actin maturation protease">
    <location>
        <begin position="1"/>
        <end position="351"/>
    </location>
</feature>
<feature type="region of interest" description="Disordered" evidence="2">
    <location>
        <begin position="1"/>
        <end position="70"/>
    </location>
</feature>
<feature type="region of interest" description="Peptidase C39-like" evidence="6">
    <location>
        <begin position="124"/>
        <end position="244"/>
    </location>
</feature>
<feature type="compositionally biased region" description="Pro residues" evidence="2">
    <location>
        <begin position="1"/>
        <end position="19"/>
    </location>
</feature>
<feature type="compositionally biased region" description="Low complexity" evidence="2">
    <location>
        <begin position="36"/>
        <end position="50"/>
    </location>
</feature>
<feature type="compositionally biased region" description="Pro residues" evidence="2">
    <location>
        <begin position="51"/>
        <end position="64"/>
    </location>
</feature>
<feature type="active site" evidence="8">
    <location>
        <position position="132"/>
    </location>
</feature>
<feature type="modified residue" description="Phosphoserine" evidence="10 11 12">
    <location>
        <position position="316"/>
    </location>
</feature>
<feature type="splice variant" id="VSP_039884" description="In isoform 2 and isoform 3." evidence="4 5">
    <original>MTSPCSPPLKPPISPPKTPVPQASSIPSPPLPPSPLDFSALPSPPWSQQTPVPPPLPLPPPPAATGPAPRHVFGLEKSQLLKEAFDKAGPVPKGREDVKRLLKLHKDRFRGDLRWILFCADLPSLIQEGPQCGLVALWMAGTLLSPPSGVPLERLIRVATERGYTAQGEMFSVADMGRLAQEVLGCQAKLLSGGLGGPNRDLVLQHLVTGHPLLIP</original>
    <variation>MRAGGLVDGRYSPVAPQWRPPGETHTGGHGKRLHGPGRDVLSTS</variation>
    <location>
        <begin position="1"/>
        <end position="216"/>
    </location>
</feature>
<feature type="splice variant" id="VSP_039885" description="In isoform 2." evidence="4">
    <original>VRESNLQLTDFSPSRATDGRVYVVPVGGVRAGLCGQALLLTPQDCSH</original>
    <variation>GPPLSSH</variation>
    <location>
        <begin position="305"/>
        <end position="351"/>
    </location>
</feature>
<feature type="mutagenesis site" description="Catalytically inactive, disrupts N-terminal cleavage of immature actin." evidence="3">
    <original>C</original>
    <variation>A</variation>
    <location>
        <position position="132"/>
    </location>
</feature>
<feature type="sequence conflict" description="In Ref. 3; BC020262." evidence="7" ref="3">
    <original>R</original>
    <variation>P</variation>
    <location>
        <position position="70"/>
    </location>
</feature>
<comment type="function">
    <text evidence="1 3">Actin maturation protease that specifically mediates the cleavage of immature acetylated N-terminal actin, thereby contributing to actin maturation (PubMed:36173861). Cleaves N-terminal acetylated methionine of immature cytoplasmic beta- and gamma-actins ACTB and ACTG1 after translation (PubMed:36173861). Cleaves N-terminal acetylated cysteine of muscle alpha-actins ACTA1, ACTC1 and ACTA2 after canonical removal of N-terminal methionine (By similarity).</text>
</comment>
<comment type="catalytic activity">
    <molecule>Actin maturation protease</molecule>
    <reaction evidence="3">
        <text>N-terminal N(alpha)-acetyl-L-methionyl-L-aspartyl-[protein] + H2O = N-terminal L-aspartyl-[protein] + N-acetyl-L-methionine</text>
        <dbReference type="Rhea" id="RHEA:74571"/>
        <dbReference type="Rhea" id="RHEA-COMP:12669"/>
        <dbReference type="Rhea" id="RHEA-COMP:12693"/>
        <dbReference type="ChEBI" id="CHEBI:15377"/>
        <dbReference type="ChEBI" id="CHEBI:64720"/>
        <dbReference type="ChEBI" id="CHEBI:71670"/>
        <dbReference type="ChEBI" id="CHEBI:133063"/>
    </reaction>
    <physiologicalReaction direction="left-to-right" evidence="3">
        <dbReference type="Rhea" id="RHEA:74572"/>
    </physiologicalReaction>
</comment>
<comment type="catalytic activity">
    <molecule>Actin maturation protease</molecule>
    <reaction evidence="3">
        <text>N-terminal N(alpha)-acetyl-L-methionyl-L-glutamyl-[protein] + H2O = N-terminal L-glutamyl-[protein] + N-acetyl-L-methionine</text>
        <dbReference type="Rhea" id="RHEA:74575"/>
        <dbReference type="Rhea" id="RHEA-COMP:12668"/>
        <dbReference type="Rhea" id="RHEA-COMP:12697"/>
        <dbReference type="ChEBI" id="CHEBI:15377"/>
        <dbReference type="ChEBI" id="CHEBI:64721"/>
        <dbReference type="ChEBI" id="CHEBI:71670"/>
        <dbReference type="ChEBI" id="CHEBI:133360"/>
    </reaction>
    <physiologicalReaction direction="left-to-right" evidence="3">
        <dbReference type="Rhea" id="RHEA:74576"/>
    </physiologicalReaction>
</comment>
<comment type="catalytic activity">
    <molecule>Actin maturation protease</molecule>
    <reaction evidence="1">
        <text>N-terminal N(alpha)-acetyl-L-cysteinyl-L-aspartyl-[protein] + H2O = N-terminal L-aspartyl-[protein] + N-acetyl-L-cysteine</text>
        <dbReference type="Rhea" id="RHEA:74579"/>
        <dbReference type="Rhea" id="RHEA-COMP:12669"/>
        <dbReference type="Rhea" id="RHEA-COMP:18395"/>
        <dbReference type="ChEBI" id="CHEBI:15377"/>
        <dbReference type="ChEBI" id="CHEBI:64720"/>
        <dbReference type="ChEBI" id="CHEBI:78236"/>
        <dbReference type="ChEBI" id="CHEBI:193599"/>
    </reaction>
    <physiologicalReaction direction="left-to-right" evidence="1">
        <dbReference type="Rhea" id="RHEA:74580"/>
    </physiologicalReaction>
</comment>
<comment type="catalytic activity">
    <molecule>Actin maturation protease</molecule>
    <reaction evidence="1">
        <text>N-terminal N(alpha)-acetyl-L-cysteinyl-L-glutamyl-[protein] + H2O = N-terminal L-glutamyl-[protein] + N-acetyl-L-cysteine</text>
        <dbReference type="Rhea" id="RHEA:74583"/>
        <dbReference type="Rhea" id="RHEA-COMP:12668"/>
        <dbReference type="Rhea" id="RHEA-COMP:18396"/>
        <dbReference type="ChEBI" id="CHEBI:15377"/>
        <dbReference type="ChEBI" id="CHEBI:64721"/>
        <dbReference type="ChEBI" id="CHEBI:78236"/>
        <dbReference type="ChEBI" id="CHEBI:193601"/>
    </reaction>
    <physiologicalReaction direction="left-to-right" evidence="1">
        <dbReference type="Rhea" id="RHEA:74584"/>
    </physiologicalReaction>
</comment>
<comment type="subunit">
    <text evidence="3">Interacts (via N-terminus) with PFN2 isoforms IIa and IIb; the interactions may facilitate efficient cleavage of the acetylated N-terminus of immature actin (PubMed:36173861). Interacts with PFN1 (PubMed:36173861).</text>
</comment>
<comment type="interaction">
    <interactant intactId="EBI-11976299">
        <id>Q5BKX5-3</id>
    </interactant>
    <interactant intactId="EBI-2809489">
        <id>Q9NQ94</id>
        <label>A1CF</label>
    </interactant>
    <organismsDiffer>false</organismsDiffer>
    <experiments>3</experiments>
</comment>
<comment type="interaction">
    <interactant intactId="EBI-11976299">
        <id>Q5BKX5-3</id>
    </interactant>
    <interactant intactId="EBI-11096309">
        <id>Q9NYB9-2</id>
        <label>ABI2</label>
    </interactant>
    <organismsDiffer>false</organismsDiffer>
    <experiments>5</experiments>
</comment>
<comment type="interaction">
    <interactant intactId="EBI-11976299">
        <id>Q5BKX5-3</id>
    </interactant>
    <interactant intactId="EBI-727098">
        <id>P21549</id>
        <label>AGXT</label>
    </interactant>
    <organismsDiffer>false</organismsDiffer>
    <experiments>3</experiments>
</comment>
<comment type="interaction">
    <interactant intactId="EBI-11976299">
        <id>Q5BKX5-3</id>
    </interactant>
    <interactant intactId="EBI-11954519">
        <id>Q49AR9</id>
        <label>ANKS1A</label>
    </interactant>
    <organismsDiffer>false</organismsDiffer>
    <experiments>3</experiments>
</comment>
<comment type="interaction">
    <interactant intactId="EBI-11976299">
        <id>Q5BKX5-3</id>
    </interactant>
    <interactant intactId="EBI-948603">
        <id>Q03989</id>
        <label>ARID5A</label>
    </interactant>
    <organismsDiffer>false</organismsDiffer>
    <experiments>3</experiments>
</comment>
<comment type="interaction">
    <interactant intactId="EBI-11976299">
        <id>Q5BKX5-3</id>
    </interactant>
    <interactant intactId="EBI-747133">
        <id>P27658</id>
        <label>COL8A1</label>
    </interactant>
    <organismsDiffer>false</organismsDiffer>
    <experiments>3</experiments>
</comment>
<comment type="interaction">
    <interactant intactId="EBI-11976299">
        <id>Q5BKX5-3</id>
    </interactant>
    <interactant intactId="EBI-3867333">
        <id>A8MQ03</id>
        <label>CYSRT1</label>
    </interactant>
    <organismsDiffer>false</organismsDiffer>
    <experiments>3</experiments>
</comment>
<comment type="interaction">
    <interactant intactId="EBI-11976299">
        <id>Q5BKX5-3</id>
    </interactant>
    <interactant intactId="EBI-740376">
        <id>Q86UW9</id>
        <label>DTX2</label>
    </interactant>
    <organismsDiffer>false</organismsDiffer>
    <experiments>3</experiments>
</comment>
<comment type="interaction">
    <interactant intactId="EBI-11976299">
        <id>Q5BKX5-3</id>
    </interactant>
    <interactant intactId="EBI-744099">
        <id>Q9H0I2</id>
        <label>ENKD1</label>
    </interactant>
    <organismsDiffer>false</organismsDiffer>
    <experiments>3</experiments>
</comment>
<comment type="interaction">
    <interactant intactId="EBI-11976299">
        <id>Q5BKX5-3</id>
    </interactant>
    <interactant intactId="EBI-2807642">
        <id>Q8WU58</id>
        <label>FAM222B</label>
    </interactant>
    <organismsDiffer>false</organismsDiffer>
    <experiments>3</experiments>
</comment>
<comment type="interaction">
    <interactant intactId="EBI-11976299">
        <id>Q5BKX5-3</id>
    </interactant>
    <interactant intactId="EBI-2339898">
        <id>Q9NW38</id>
        <label>FANCL</label>
    </interactant>
    <organismsDiffer>false</organismsDiffer>
    <experiments>3</experiments>
</comment>
<comment type="interaction">
    <interactant intactId="EBI-11976299">
        <id>Q5BKX5-3</id>
    </interactant>
    <interactant intactId="EBI-3864120">
        <id>Q8WUP2</id>
        <label>FBLIM1</label>
    </interactant>
    <organismsDiffer>false</organismsDiffer>
    <experiments>3</experiments>
</comment>
<comment type="interaction">
    <interactant intactId="EBI-11976299">
        <id>Q5BKX5-3</id>
    </interactant>
    <interactant intactId="EBI-10242151">
        <id>Q53EP0-3</id>
        <label>FNDC3B</label>
    </interactant>
    <organismsDiffer>false</organismsDiffer>
    <experiments>3</experiments>
</comment>
<comment type="interaction">
    <interactant intactId="EBI-11976299">
        <id>Q5BKX5-3</id>
    </interactant>
    <interactant intactId="EBI-1759806">
        <id>O75593</id>
        <label>FOXH1</label>
    </interactant>
    <organismsDiffer>false</organismsDiffer>
    <experiments>3</experiments>
</comment>
<comment type="interaction">
    <interactant intactId="EBI-11976299">
        <id>Q5BKX5-3</id>
    </interactant>
    <interactant intactId="EBI-725515">
        <id>O43559</id>
        <label>FRS3</label>
    </interactant>
    <organismsDiffer>false</organismsDiffer>
    <experiments>3</experiments>
</comment>
<comment type="interaction">
    <interactant intactId="EBI-11976299">
        <id>Q5BKX5-3</id>
    </interactant>
    <interactant intactId="EBI-7251368">
        <id>Q9BZE0</id>
        <label>GLIS2</label>
    </interactant>
    <organismsDiffer>false</organismsDiffer>
    <experiments>5</experiments>
</comment>
<comment type="interaction">
    <interactant intactId="EBI-11976299">
        <id>Q5BKX5-3</id>
    </interactant>
    <interactant intactId="EBI-748515">
        <id>Q8IVS8</id>
        <label>GLYCTK</label>
    </interactant>
    <organismsDiffer>false</organismsDiffer>
    <experiments>3</experiments>
</comment>
<comment type="interaction">
    <interactant intactId="EBI-11976299">
        <id>Q5BKX5-3</id>
    </interactant>
    <interactant intactId="EBI-713355">
        <id>Q13227</id>
        <label>GPS2</label>
    </interactant>
    <organismsDiffer>false</organismsDiffer>
    <experiments>3</experiments>
</comment>
<comment type="interaction">
    <interactant intactId="EBI-11976299">
        <id>Q5BKX5-3</id>
    </interactant>
    <interactant intactId="EBI-1752118">
        <id>P31273</id>
        <label>HOXC8</label>
    </interactant>
    <organismsDiffer>false</organismsDiffer>
    <experiments>3</experiments>
</comment>
<comment type="interaction">
    <interactant intactId="EBI-11976299">
        <id>Q5BKX5-3</id>
    </interactant>
    <interactant intactId="EBI-2880706">
        <id>O43593</id>
        <label>HR</label>
    </interactant>
    <organismsDiffer>false</organismsDiffer>
    <experiments>3</experiments>
</comment>
<comment type="interaction">
    <interactant intactId="EBI-11976299">
        <id>Q5BKX5-3</id>
    </interactant>
    <interactant intactId="EBI-12056251">
        <id>Q9ULV5-2</id>
        <label>HSF4</label>
    </interactant>
    <organismsDiffer>false</organismsDiffer>
    <experiments>3</experiments>
</comment>
<comment type="interaction">
    <interactant intactId="EBI-11976299">
        <id>Q5BKX5-3</id>
    </interactant>
    <interactant intactId="EBI-11955401">
        <id>Q86VF2-5</id>
        <label>IGFN1</label>
    </interactant>
    <organismsDiffer>false</organismsDiffer>
    <experiments>3</experiments>
</comment>
<comment type="interaction">
    <interactant intactId="EBI-11976299">
        <id>Q5BKX5-3</id>
    </interactant>
    <interactant intactId="EBI-6509505">
        <id>Q0VD86</id>
        <label>INCA1</label>
    </interactant>
    <organismsDiffer>false</organismsDiffer>
    <experiments>3</experiments>
</comment>
<comment type="interaction">
    <interactant intactId="EBI-11976299">
        <id>Q5BKX5-3</id>
    </interactant>
    <interactant intactId="EBI-4397613">
        <id>Q7L273</id>
        <label>KCTD9</label>
    </interactant>
    <organismsDiffer>false</organismsDiffer>
    <experiments>3</experiments>
</comment>
<comment type="interaction">
    <interactant intactId="EBI-11976299">
        <id>Q5BKX5-3</id>
    </interactant>
    <interactant intactId="EBI-10981970">
        <id>Q5T749</id>
        <label>KPRP</label>
    </interactant>
    <organismsDiffer>false</organismsDiffer>
    <experiments>3</experiments>
</comment>
<comment type="interaction">
    <interactant intactId="EBI-11976299">
        <id>Q5BKX5-3</id>
    </interactant>
    <interactant intactId="EBI-10171734">
        <id>A1A580</id>
        <label>KRTAP23-1</label>
    </interactant>
    <organismsDiffer>false</organismsDiffer>
    <experiments>3</experiments>
</comment>
<comment type="interaction">
    <interactant intactId="EBI-11976299">
        <id>Q5BKX5-3</id>
    </interactant>
    <interactant intactId="EBI-3957672">
        <id>Q6PEX3</id>
        <label>KRTAP26-1</label>
    </interactant>
    <organismsDiffer>false</organismsDiffer>
    <experiments>3</experiments>
</comment>
<comment type="interaction">
    <interactant intactId="EBI-11976299">
        <id>Q5BKX5-3</id>
    </interactant>
    <interactant intactId="EBI-9088686">
        <id>Q14847-2</id>
        <label>LASP1</label>
    </interactant>
    <organismsDiffer>false</organismsDiffer>
    <experiments>3</experiments>
</comment>
<comment type="interaction">
    <interactant intactId="EBI-11976299">
        <id>Q5BKX5-3</id>
    </interactant>
    <interactant intactId="EBI-11742507">
        <id>Q8TAP4-4</id>
        <label>LMO3</label>
    </interactant>
    <organismsDiffer>false</organismsDiffer>
    <experiments>3</experiments>
</comment>
<comment type="interaction">
    <interactant intactId="EBI-11976299">
        <id>Q5BKX5-3</id>
    </interactant>
    <interactant intactId="EBI-2555085">
        <id>Q8IVT2</id>
        <label>MISP</label>
    </interactant>
    <organismsDiffer>false</organismsDiffer>
    <experiments>3</experiments>
</comment>
<comment type="interaction">
    <interactant intactId="EBI-11976299">
        <id>Q5BKX5-3</id>
    </interactant>
    <interactant intactId="EBI-11746523">
        <id>Q14511-2</id>
        <label>NEDD9</label>
    </interactant>
    <organismsDiffer>false</organismsDiffer>
    <experiments>3</experiments>
</comment>
<comment type="interaction">
    <interactant intactId="EBI-11976299">
        <id>Q5BKX5-3</id>
    </interactant>
    <interactant intactId="EBI-12025760">
        <id>Q86UR1-2</id>
        <label>NOXA1</label>
    </interactant>
    <organismsDiffer>false</organismsDiffer>
    <experiments>5</experiments>
</comment>
<comment type="interaction">
    <interactant intactId="EBI-11976299">
        <id>Q5BKX5-3</id>
    </interactant>
    <interactant intactId="EBI-11022007">
        <id>Q9HBE1-4</id>
        <label>PATZ1</label>
    </interactant>
    <organismsDiffer>false</organismsDiffer>
    <experiments>3</experiments>
</comment>
<comment type="interaction">
    <interactant intactId="EBI-11976299">
        <id>Q5BKX5-3</id>
    </interactant>
    <interactant intactId="EBI-748265">
        <id>P78337</id>
        <label>PITX1</label>
    </interactant>
    <organismsDiffer>false</organismsDiffer>
    <experiments>3</experiments>
</comment>
<comment type="interaction">
    <interactant intactId="EBI-11976299">
        <id>Q5BKX5-3</id>
    </interactant>
    <interactant intactId="EBI-750734">
        <id>Q9NRY6</id>
        <label>PLSCR3</label>
    </interactant>
    <organismsDiffer>false</organismsDiffer>
    <experiments>3</experiments>
</comment>
<comment type="interaction">
    <interactant intactId="EBI-11976299">
        <id>Q5BKX5-3</id>
    </interactant>
    <interactant intactId="EBI-1389308">
        <id>Q7Z3K3</id>
        <label>POGZ</label>
    </interactant>
    <organismsDiffer>false</organismsDiffer>
    <experiments>3</experiments>
</comment>
<comment type="interaction">
    <interactant intactId="EBI-11976299">
        <id>Q5BKX5-3</id>
    </interactant>
    <interactant intactId="EBI-1053424">
        <id>O43741</id>
        <label>PRKAB2</label>
    </interactant>
    <organismsDiffer>false</organismsDiffer>
    <experiments>3</experiments>
</comment>
<comment type="interaction">
    <interactant intactId="EBI-11976299">
        <id>Q5BKX5-3</id>
    </interactant>
    <interactant intactId="EBI-9027467">
        <id>O75360</id>
        <label>PROP1</label>
    </interactant>
    <organismsDiffer>false</organismsDiffer>
    <experiments>3</experiments>
</comment>
<comment type="interaction">
    <interactant intactId="EBI-11976299">
        <id>Q5BKX5-3</id>
    </interactant>
    <interactant intactId="EBI-11986293">
        <id>P0CG20</id>
        <label>PRR35</label>
    </interactant>
    <organismsDiffer>false</organismsDiffer>
    <experiments>3</experiments>
</comment>
<comment type="interaction">
    <interactant intactId="EBI-11976299">
        <id>Q5BKX5-3</id>
    </interactant>
    <interactant intactId="EBI-2798044">
        <id>Q2TAL8</id>
        <label>QRICH1</label>
    </interactant>
    <organismsDiffer>false</organismsDiffer>
    <experiments>3</experiments>
</comment>
<comment type="interaction">
    <interactant intactId="EBI-11976299">
        <id>Q5BKX5-3</id>
    </interactant>
    <interactant intactId="EBI-740343">
        <id>Q93062-3</id>
        <label>RBPMS</label>
    </interactant>
    <organismsDiffer>false</organismsDiffer>
    <experiments>3</experiments>
</comment>
<comment type="interaction">
    <interactant intactId="EBI-11976299">
        <id>Q5BKX5-3</id>
    </interactant>
    <interactant intactId="EBI-11987469">
        <id>Q6ZRY4</id>
        <label>RBPMS2</label>
    </interactant>
    <organismsDiffer>false</organismsDiffer>
    <experiments>3</experiments>
</comment>
<comment type="interaction">
    <interactant intactId="EBI-11976299">
        <id>Q5BKX5-3</id>
    </interactant>
    <interactant intactId="EBI-6422642">
        <id>Q01974</id>
        <label>ROR2</label>
    </interactant>
    <organismsDiffer>false</organismsDiffer>
    <experiments>3</experiments>
</comment>
<comment type="interaction">
    <interactant intactId="EBI-11976299">
        <id>Q5BKX5-3</id>
    </interactant>
    <interactant intactId="EBI-3957636">
        <id>Q8IYX7</id>
        <label>SAXO1</label>
    </interactant>
    <organismsDiffer>false</organismsDiffer>
    <experiments>3</experiments>
</comment>
<comment type="interaction">
    <interactant intactId="EBI-11976299">
        <id>Q5BKX5-3</id>
    </interactant>
    <interactant intactId="EBI-358489">
        <id>Q96GM5</id>
        <label>SMARCD1</label>
    </interactant>
    <organismsDiffer>false</organismsDiffer>
    <experiments>3</experiments>
</comment>
<comment type="interaction">
    <interactant intactId="EBI-11976299">
        <id>Q5BKX5-3</id>
    </interactant>
    <interactant intactId="EBI-766589">
        <id>P09234</id>
        <label>SNRPC</label>
    </interactant>
    <organismsDiffer>false</organismsDiffer>
    <experiments>3</experiments>
</comment>
<comment type="interaction">
    <interactant intactId="EBI-11976299">
        <id>Q5BKX5-3</id>
    </interactant>
    <interactant intactId="EBI-11959123">
        <id>Q99932-2</id>
        <label>SPAG8</label>
    </interactant>
    <organismsDiffer>false</organismsDiffer>
    <experiments>4</experiments>
</comment>
<comment type="interaction">
    <interactant intactId="EBI-11976299">
        <id>Q5BKX5-3</id>
    </interactant>
    <interactant intactId="EBI-2824328">
        <id>O95947</id>
        <label>TBX6</label>
    </interactant>
    <organismsDiffer>false</organismsDiffer>
    <experiments>3</experiments>
</comment>
<comment type="interaction">
    <interactant intactId="EBI-11976299">
        <id>Q5BKX5-3</id>
    </interactant>
    <interactant intactId="EBI-954089">
        <id>O15273</id>
        <label>TCAP</label>
    </interactant>
    <organismsDiffer>false</organismsDiffer>
    <experiments>3</experiments>
</comment>
<comment type="interaction">
    <interactant intactId="EBI-11976299">
        <id>Q5BKX5-3</id>
    </interactant>
    <interactant intactId="EBI-11746252">
        <id>Q9NQB0-10</id>
        <label>TCF7L2</label>
    </interactant>
    <organismsDiffer>false</organismsDiffer>
    <experiments>3</experiments>
</comment>
<comment type="interaction">
    <interactant intactId="EBI-11976299">
        <id>Q5BKX5-3</id>
    </interactant>
    <interactant intactId="EBI-10239812">
        <id>Q96M29</id>
        <label>TEKT5</label>
    </interactant>
    <organismsDiffer>false</organismsDiffer>
    <experiments>3</experiments>
</comment>
<comment type="interaction">
    <interactant intactId="EBI-11976299">
        <id>Q5BKX5-3</id>
    </interactant>
    <interactant intactId="EBI-357061">
        <id>Q92734</id>
        <label>TFG</label>
    </interactant>
    <organismsDiffer>false</organismsDiffer>
    <experiments>3</experiments>
</comment>
<comment type="interaction">
    <interactant intactId="EBI-11976299">
        <id>Q5BKX5-3</id>
    </interactant>
    <interactant intactId="EBI-11741437">
        <id>Q08117-2</id>
        <label>TLE5</label>
    </interactant>
    <organismsDiffer>false</organismsDiffer>
    <experiments>3</experiments>
</comment>
<comment type="interaction">
    <interactant intactId="EBI-11976299">
        <id>Q5BKX5-3</id>
    </interactant>
    <interactant intactId="EBI-3939165">
        <id>O43711</id>
        <label>TLX3</label>
    </interactant>
    <organismsDiffer>false</organismsDiffer>
    <experiments>3</experiments>
</comment>
<comment type="interaction">
    <interactant intactId="EBI-11976299">
        <id>Q5BKX5-3</id>
    </interactant>
    <interactant intactId="EBI-74615">
        <id>Q9H0E2</id>
        <label>TOLLIP</label>
    </interactant>
    <organismsDiffer>false</organismsDiffer>
    <experiments>3</experiments>
</comment>
<comment type="interaction">
    <interactant intactId="EBI-11976299">
        <id>Q5BKX5-3</id>
    </interactant>
    <interactant intactId="EBI-3650647">
        <id>Q9BUZ4</id>
        <label>TRAF4</label>
    </interactant>
    <organismsDiffer>false</organismsDiffer>
    <experiments>3</experiments>
</comment>
<comment type="interaction">
    <interactant intactId="EBI-11976299">
        <id>Q5BKX5-3</id>
    </interactant>
    <interactant intactId="EBI-358993">
        <id>Q15645</id>
        <label>TRIP13</label>
    </interactant>
    <organismsDiffer>false</organismsDiffer>
    <experiments>3</experiments>
</comment>
<comment type="interaction">
    <interactant intactId="EBI-11976299">
        <id>Q5BKX5-3</id>
    </interactant>
    <interactant intactId="EBI-2349743">
        <id>Q12815</id>
        <label>TROAP</label>
    </interactant>
    <organismsDiffer>false</organismsDiffer>
    <experiments>3</experiments>
</comment>
<comment type="interaction">
    <interactant intactId="EBI-11976299">
        <id>Q5BKX5-3</id>
    </interactant>
    <interactant intactId="EBI-2107455">
        <id>Q08AM6</id>
        <label>VAC14</label>
    </interactant>
    <organismsDiffer>false</organismsDiffer>
    <experiments>3</experiments>
</comment>
<comment type="interaction">
    <interactant intactId="EBI-11976299">
        <id>Q5BKX5-3</id>
    </interactant>
    <interactant intactId="EBI-10191303">
        <id>O95231</id>
        <label>VENTX</label>
    </interactant>
    <organismsDiffer>false</organismsDiffer>
    <experiments>3</experiments>
</comment>
<comment type="interaction">
    <interactant intactId="EBI-11976299">
        <id>Q5BKX5-3</id>
    </interactant>
    <interactant intactId="EBI-12032042">
        <id>Q64LD2-2</id>
        <label>WDR25</label>
    </interactant>
    <organismsDiffer>false</organismsDiffer>
    <experiments>3</experiments>
</comment>
<comment type="interaction">
    <interactant intactId="EBI-11976299">
        <id>Q5BKX5-3</id>
    </interactant>
    <interactant intactId="EBI-12040603">
        <id>Q9NZC7-5</id>
        <label>WWOX</label>
    </interactant>
    <organismsDiffer>false</organismsDiffer>
    <experiments>3</experiments>
</comment>
<comment type="interaction">
    <interactant intactId="EBI-11976299">
        <id>Q5BKX5-3</id>
    </interactant>
    <interactant intactId="EBI-14104088">
        <id>Q53FD0-2</id>
        <label>ZC2HC1C</label>
    </interactant>
    <organismsDiffer>false</organismsDiffer>
    <experiments>3</experiments>
</comment>
<comment type="interaction">
    <interactant intactId="EBI-11976299">
        <id>Q5BKX5-3</id>
    </interactant>
    <interactant intactId="EBI-742550">
        <id>Q96K80</id>
        <label>ZC3H10</label>
    </interactant>
    <organismsDiffer>false</organismsDiffer>
    <experiments>3</experiments>
</comment>
<comment type="interaction">
    <interactant intactId="EBI-11976299">
        <id>Q5BKX5-3</id>
    </interactant>
    <interactant intactId="EBI-746595">
        <id>Q96E35</id>
        <label>ZMYND19</label>
    </interactant>
    <organismsDiffer>false</organismsDiffer>
    <experiments>3</experiments>
</comment>
<comment type="interaction">
    <interactant intactId="EBI-11976299">
        <id>Q5BKX5-3</id>
    </interactant>
    <interactant intactId="EBI-750454">
        <id>Q96EJ4</id>
    </interactant>
    <organismsDiffer>false</organismsDiffer>
    <experiments>3</experiments>
</comment>
<comment type="subcellular location">
    <subcellularLocation>
        <location evidence="8">Cytoplasm</location>
    </subcellularLocation>
</comment>
<comment type="alternative products">
    <event type="alternative splicing"/>
    <isoform>
        <id>Q5BKX5-1</id>
        <name>1</name>
        <sequence type="displayed"/>
    </isoform>
    <isoform>
        <id>Q5BKX5-2</id>
        <name>2</name>
        <sequence type="described" ref="VSP_039884 VSP_039885"/>
    </isoform>
    <isoform>
        <id>Q5BKX5-3</id>
        <name>3</name>
        <sequence type="described" ref="VSP_039884"/>
    </isoform>
</comment>
<comment type="domain">
    <text evidence="3">The N-terminal proline-rich disordered region contributes to the interaction with PFN2.</text>
</comment>
<comment type="similarity">
    <text evidence="7">Belongs to the ACTMAP family.</text>
</comment>
<reference key="1">
    <citation type="journal article" date="2004" name="Nat. Genet.">
        <title>Complete sequencing and characterization of 21,243 full-length human cDNAs.</title>
        <authorList>
            <person name="Ota T."/>
            <person name="Suzuki Y."/>
            <person name="Nishikawa T."/>
            <person name="Otsuki T."/>
            <person name="Sugiyama T."/>
            <person name="Irie R."/>
            <person name="Wakamatsu A."/>
            <person name="Hayashi K."/>
            <person name="Sato H."/>
            <person name="Nagai K."/>
            <person name="Kimura K."/>
            <person name="Makita H."/>
            <person name="Sekine M."/>
            <person name="Obayashi M."/>
            <person name="Nishi T."/>
            <person name="Shibahara T."/>
            <person name="Tanaka T."/>
            <person name="Ishii S."/>
            <person name="Yamamoto J."/>
            <person name="Saito K."/>
            <person name="Kawai Y."/>
            <person name="Isono Y."/>
            <person name="Nakamura Y."/>
            <person name="Nagahari K."/>
            <person name="Murakami K."/>
            <person name="Yasuda T."/>
            <person name="Iwayanagi T."/>
            <person name="Wagatsuma M."/>
            <person name="Shiratori A."/>
            <person name="Sudo H."/>
            <person name="Hosoiri T."/>
            <person name="Kaku Y."/>
            <person name="Kodaira H."/>
            <person name="Kondo H."/>
            <person name="Sugawara M."/>
            <person name="Takahashi M."/>
            <person name="Kanda K."/>
            <person name="Yokoi T."/>
            <person name="Furuya T."/>
            <person name="Kikkawa E."/>
            <person name="Omura Y."/>
            <person name="Abe K."/>
            <person name="Kamihara K."/>
            <person name="Katsuta N."/>
            <person name="Sato K."/>
            <person name="Tanikawa M."/>
            <person name="Yamazaki M."/>
            <person name="Ninomiya K."/>
            <person name="Ishibashi T."/>
            <person name="Yamashita H."/>
            <person name="Murakawa K."/>
            <person name="Fujimori K."/>
            <person name="Tanai H."/>
            <person name="Kimata M."/>
            <person name="Watanabe M."/>
            <person name="Hiraoka S."/>
            <person name="Chiba Y."/>
            <person name="Ishida S."/>
            <person name="Ono Y."/>
            <person name="Takiguchi S."/>
            <person name="Watanabe S."/>
            <person name="Yosida M."/>
            <person name="Hotuta T."/>
            <person name="Kusano J."/>
            <person name="Kanehori K."/>
            <person name="Takahashi-Fujii A."/>
            <person name="Hara H."/>
            <person name="Tanase T.-O."/>
            <person name="Nomura Y."/>
            <person name="Togiya S."/>
            <person name="Komai F."/>
            <person name="Hara R."/>
            <person name="Takeuchi K."/>
            <person name="Arita M."/>
            <person name="Imose N."/>
            <person name="Musashino K."/>
            <person name="Yuuki H."/>
            <person name="Oshima A."/>
            <person name="Sasaki N."/>
            <person name="Aotsuka S."/>
            <person name="Yoshikawa Y."/>
            <person name="Matsunawa H."/>
            <person name="Ichihara T."/>
            <person name="Shiohata N."/>
            <person name="Sano S."/>
            <person name="Moriya S."/>
            <person name="Momiyama H."/>
            <person name="Satoh N."/>
            <person name="Takami S."/>
            <person name="Terashima Y."/>
            <person name="Suzuki O."/>
            <person name="Nakagawa S."/>
            <person name="Senoh A."/>
            <person name="Mizoguchi H."/>
            <person name="Goto Y."/>
            <person name="Shimizu F."/>
            <person name="Wakebe H."/>
            <person name="Hishigaki H."/>
            <person name="Watanabe T."/>
            <person name="Sugiyama A."/>
            <person name="Takemoto M."/>
            <person name="Kawakami B."/>
            <person name="Yamazaki M."/>
            <person name="Watanabe K."/>
            <person name="Kumagai A."/>
            <person name="Itakura S."/>
            <person name="Fukuzumi Y."/>
            <person name="Fujimori Y."/>
            <person name="Komiyama M."/>
            <person name="Tashiro H."/>
            <person name="Tanigami A."/>
            <person name="Fujiwara T."/>
            <person name="Ono T."/>
            <person name="Yamada K."/>
            <person name="Fujii Y."/>
            <person name="Ozaki K."/>
            <person name="Hirao M."/>
            <person name="Ohmori Y."/>
            <person name="Kawabata A."/>
            <person name="Hikiji T."/>
            <person name="Kobatake N."/>
            <person name="Inagaki H."/>
            <person name="Ikema Y."/>
            <person name="Okamoto S."/>
            <person name="Okitani R."/>
            <person name="Kawakami T."/>
            <person name="Noguchi S."/>
            <person name="Itoh T."/>
            <person name="Shigeta K."/>
            <person name="Senba T."/>
            <person name="Matsumura K."/>
            <person name="Nakajima Y."/>
            <person name="Mizuno T."/>
            <person name="Morinaga M."/>
            <person name="Sasaki M."/>
            <person name="Togashi T."/>
            <person name="Oyama M."/>
            <person name="Hata H."/>
            <person name="Watanabe M."/>
            <person name="Komatsu T."/>
            <person name="Mizushima-Sugano J."/>
            <person name="Satoh T."/>
            <person name="Shirai Y."/>
            <person name="Takahashi Y."/>
            <person name="Nakagawa K."/>
            <person name="Okumura K."/>
            <person name="Nagase T."/>
            <person name="Nomura N."/>
            <person name="Kikuchi H."/>
            <person name="Masuho Y."/>
            <person name="Yamashita R."/>
            <person name="Nakai K."/>
            <person name="Yada T."/>
            <person name="Nakamura Y."/>
            <person name="Ohara O."/>
            <person name="Isogai T."/>
            <person name="Sugano S."/>
        </authorList>
    </citation>
    <scope>NUCLEOTIDE SEQUENCE [LARGE SCALE MRNA] (ISOFORM 2)</scope>
    <source>
        <tissue>Lung</tissue>
    </source>
</reference>
<reference key="2">
    <citation type="journal article" date="2004" name="Nature">
        <title>The DNA sequence and biology of human chromosome 19.</title>
        <authorList>
            <person name="Grimwood J."/>
            <person name="Gordon L.A."/>
            <person name="Olsen A.S."/>
            <person name="Terry A."/>
            <person name="Schmutz J."/>
            <person name="Lamerdin J.E."/>
            <person name="Hellsten U."/>
            <person name="Goodstein D."/>
            <person name="Couronne O."/>
            <person name="Tran-Gyamfi M."/>
            <person name="Aerts A."/>
            <person name="Altherr M."/>
            <person name="Ashworth L."/>
            <person name="Bajorek E."/>
            <person name="Black S."/>
            <person name="Branscomb E."/>
            <person name="Caenepeel S."/>
            <person name="Carrano A.V."/>
            <person name="Caoile C."/>
            <person name="Chan Y.M."/>
            <person name="Christensen M."/>
            <person name="Cleland C.A."/>
            <person name="Copeland A."/>
            <person name="Dalin E."/>
            <person name="Dehal P."/>
            <person name="Denys M."/>
            <person name="Detter J.C."/>
            <person name="Escobar J."/>
            <person name="Flowers D."/>
            <person name="Fotopulos D."/>
            <person name="Garcia C."/>
            <person name="Georgescu A.M."/>
            <person name="Glavina T."/>
            <person name="Gomez M."/>
            <person name="Gonzales E."/>
            <person name="Groza M."/>
            <person name="Hammon N."/>
            <person name="Hawkins T."/>
            <person name="Haydu L."/>
            <person name="Ho I."/>
            <person name="Huang W."/>
            <person name="Israni S."/>
            <person name="Jett J."/>
            <person name="Kadner K."/>
            <person name="Kimball H."/>
            <person name="Kobayashi A."/>
            <person name="Larionov V."/>
            <person name="Leem S.-H."/>
            <person name="Lopez F."/>
            <person name="Lou Y."/>
            <person name="Lowry S."/>
            <person name="Malfatti S."/>
            <person name="Martinez D."/>
            <person name="McCready P.M."/>
            <person name="Medina C."/>
            <person name="Morgan J."/>
            <person name="Nelson K."/>
            <person name="Nolan M."/>
            <person name="Ovcharenko I."/>
            <person name="Pitluck S."/>
            <person name="Pollard M."/>
            <person name="Popkie A.P."/>
            <person name="Predki P."/>
            <person name="Quan G."/>
            <person name="Ramirez L."/>
            <person name="Rash S."/>
            <person name="Retterer J."/>
            <person name="Rodriguez A."/>
            <person name="Rogers S."/>
            <person name="Salamov A."/>
            <person name="Salazar A."/>
            <person name="She X."/>
            <person name="Smith D."/>
            <person name="Slezak T."/>
            <person name="Solovyev V."/>
            <person name="Thayer N."/>
            <person name="Tice H."/>
            <person name="Tsai M."/>
            <person name="Ustaszewska A."/>
            <person name="Vo N."/>
            <person name="Wagner M."/>
            <person name="Wheeler J."/>
            <person name="Wu K."/>
            <person name="Xie G."/>
            <person name="Yang J."/>
            <person name="Dubchak I."/>
            <person name="Furey T.S."/>
            <person name="DeJong P."/>
            <person name="Dickson M."/>
            <person name="Gordon D."/>
            <person name="Eichler E.E."/>
            <person name="Pennacchio L.A."/>
            <person name="Richardson P."/>
            <person name="Stubbs L."/>
            <person name="Rokhsar D.S."/>
            <person name="Myers R.M."/>
            <person name="Rubin E.M."/>
            <person name="Lucas S.M."/>
        </authorList>
    </citation>
    <scope>NUCLEOTIDE SEQUENCE [LARGE SCALE GENOMIC DNA]</scope>
</reference>
<reference key="3">
    <citation type="journal article" date="2004" name="Genome Res.">
        <title>The status, quality, and expansion of the NIH full-length cDNA project: the Mammalian Gene Collection (MGC).</title>
        <authorList>
            <consortium name="The MGC Project Team"/>
        </authorList>
    </citation>
    <scope>NUCLEOTIDE SEQUENCE [LARGE SCALE MRNA] (ISOFORMS 1 AND 3)</scope>
    <source>
        <tissue>Melanoma</tissue>
        <tissue>Testis</tissue>
    </source>
</reference>
<reference key="4">
    <citation type="journal article" date="2008" name="Proc. Natl. Acad. Sci. U.S.A.">
        <title>A quantitative atlas of mitotic phosphorylation.</title>
        <authorList>
            <person name="Dephoure N."/>
            <person name="Zhou C."/>
            <person name="Villen J."/>
            <person name="Beausoleil S.A."/>
            <person name="Bakalarski C.E."/>
            <person name="Elledge S.J."/>
            <person name="Gygi S.P."/>
        </authorList>
    </citation>
    <scope>PHOSPHORYLATION [LARGE SCALE ANALYSIS] AT SER-316</scope>
    <scope>IDENTIFICATION BY MASS SPECTROMETRY [LARGE SCALE ANALYSIS]</scope>
    <source>
        <tissue>Cervix carcinoma</tissue>
    </source>
</reference>
<reference key="5">
    <citation type="journal article" date="2010" name="Sci. Signal.">
        <title>Quantitative phosphoproteomics reveals widespread full phosphorylation site occupancy during mitosis.</title>
        <authorList>
            <person name="Olsen J.V."/>
            <person name="Vermeulen M."/>
            <person name="Santamaria A."/>
            <person name="Kumar C."/>
            <person name="Miller M.L."/>
            <person name="Jensen L.J."/>
            <person name="Gnad F."/>
            <person name="Cox J."/>
            <person name="Jensen T.S."/>
            <person name="Nigg E.A."/>
            <person name="Brunak S."/>
            <person name="Mann M."/>
        </authorList>
    </citation>
    <scope>PHOSPHORYLATION [LARGE SCALE ANALYSIS] AT SER-316</scope>
    <scope>IDENTIFICATION BY MASS SPECTROMETRY [LARGE SCALE ANALYSIS]</scope>
    <source>
        <tissue>Cervix carcinoma</tissue>
    </source>
</reference>
<reference key="6">
    <citation type="journal article" date="2013" name="J. Proteome Res.">
        <title>Toward a comprehensive characterization of a human cancer cell phosphoproteome.</title>
        <authorList>
            <person name="Zhou H."/>
            <person name="Di Palma S."/>
            <person name="Preisinger C."/>
            <person name="Peng M."/>
            <person name="Polat A.N."/>
            <person name="Heck A.J."/>
            <person name="Mohammed S."/>
        </authorList>
    </citation>
    <scope>PHOSPHORYLATION [LARGE SCALE ANALYSIS] AT SER-316</scope>
    <scope>IDENTIFICATION BY MASS SPECTROMETRY [LARGE SCALE ANALYSIS]</scope>
    <source>
        <tissue>Cervix carcinoma</tissue>
        <tissue>Erythroleukemia</tissue>
    </source>
</reference>
<reference key="7">
    <citation type="journal article" date="2022" name="Science">
        <title>Actin maturation requires the ACTMAP/C19orf54 protease.</title>
        <authorList>
            <person name="Haahr P."/>
            <person name="Galli R.A."/>
            <person name="van den Hengel L.G."/>
            <person name="Bleijerveld O.B."/>
            <person name="Kazokaite-Adomaitiene J."/>
            <person name="Song J.Y."/>
            <person name="Kroese L.J."/>
            <person name="Krimpenfort P."/>
            <person name="Baltissen M.P."/>
            <person name="Vermeulen M."/>
            <person name="Ottenheijm C.A.C."/>
            <person name="Brummelkamp T.R."/>
        </authorList>
    </citation>
    <scope>FUNCTION</scope>
    <scope>CATALYTIC ACTIVITY</scope>
    <scope>SUBCELLULAR LOCATION</scope>
    <scope>INTERACTION WITH PFN1 AND PFN2 ISOFORMS IIA AND IIB</scope>
    <scope>DOMAIN</scope>
    <scope>MUTAGENESIS OF CYS-132</scope>
</reference>
<sequence>MTSPCSPPLKPPISPPKTPVPQASSIPSPPLPPSPLDFSALPSPPWSQQTPVPPPLPLPPPPAATGPAPRHVFGLEKSQLLKEAFDKAGPVPKGREDVKRLLKLHKDRFRGDLRWILFCADLPSLIQEGPQCGLVALWMAGTLLSPPSGVPLERLIRVATERGYTAQGEMFSVADMGRLAQEVLGCQAKLLSGGLGGPNRDLVLQHLVTGHPLLIPYDEDFNHEPCQRKGHKAHWAVSAGVLLGVRAVPSLGYTEDPELPGLFHPVLGTPCQPPSLPEEGSPGAVYLLSKQGKSWHYQLWDYDQVRESNLQLTDFSPSRATDGRVYVVPVGGVRAGLCGQALLLTPQDCSH</sequence>
<gene>
    <name evidence="6 9" type="primary">ACTMAP</name>
    <name evidence="9" type="synonym">C19orf54</name>
</gene>
<organism>
    <name type="scientific">Homo sapiens</name>
    <name type="common">Human</name>
    <dbReference type="NCBI Taxonomy" id="9606"/>
    <lineage>
        <taxon>Eukaryota</taxon>
        <taxon>Metazoa</taxon>
        <taxon>Chordata</taxon>
        <taxon>Craniata</taxon>
        <taxon>Vertebrata</taxon>
        <taxon>Euteleostomi</taxon>
        <taxon>Mammalia</taxon>
        <taxon>Eutheria</taxon>
        <taxon>Euarchontoglires</taxon>
        <taxon>Primates</taxon>
        <taxon>Haplorrhini</taxon>
        <taxon>Catarrhini</taxon>
        <taxon>Hominidae</taxon>
        <taxon>Homo</taxon>
    </lineage>
</organism>
<proteinExistence type="evidence at protein level"/>
<name>ACTMP_HUMAN</name>
<evidence type="ECO:0000250" key="1">
    <source>
        <dbReference type="UniProtKB" id="J3QPC3"/>
    </source>
</evidence>
<evidence type="ECO:0000256" key="2">
    <source>
        <dbReference type="SAM" id="MobiDB-lite"/>
    </source>
</evidence>
<evidence type="ECO:0000269" key="3">
    <source>
    </source>
</evidence>
<evidence type="ECO:0000303" key="4">
    <source>
    </source>
</evidence>
<evidence type="ECO:0000303" key="5">
    <source>
    </source>
</evidence>
<evidence type="ECO:0000303" key="6">
    <source>
    </source>
</evidence>
<evidence type="ECO:0000305" key="7"/>
<evidence type="ECO:0000305" key="8">
    <source>
    </source>
</evidence>
<evidence type="ECO:0000312" key="9">
    <source>
        <dbReference type="HGNC" id="HGNC:24758"/>
    </source>
</evidence>
<evidence type="ECO:0007744" key="10">
    <source>
    </source>
</evidence>
<evidence type="ECO:0007744" key="11">
    <source>
    </source>
</evidence>
<evidence type="ECO:0007744" key="12">
    <source>
    </source>
</evidence>